<dbReference type="EC" id="3.5.1.96" evidence="1"/>
<dbReference type="EMBL" id="CP000521">
    <property type="protein sequence ID" value="ABO13525.2"/>
    <property type="molecule type" value="Genomic_DNA"/>
</dbReference>
<dbReference type="RefSeq" id="WP_001150820.1">
    <property type="nucleotide sequence ID" value="NZ_CP053098.1"/>
</dbReference>
<dbReference type="SMR" id="A3M9D1"/>
<dbReference type="KEGG" id="acb:A1S_3128"/>
<dbReference type="HOGENOM" id="CLU_071608_0_0_6"/>
<dbReference type="UniPathway" id="UPA00185">
    <property type="reaction ID" value="UER00283"/>
</dbReference>
<dbReference type="GO" id="GO:0016788">
    <property type="term" value="F:hydrolase activity, acting on ester bonds"/>
    <property type="evidence" value="ECO:0007669"/>
    <property type="project" value="UniProtKB-UniRule"/>
</dbReference>
<dbReference type="GO" id="GO:0009017">
    <property type="term" value="F:succinylglutamate desuccinylase activity"/>
    <property type="evidence" value="ECO:0007669"/>
    <property type="project" value="UniProtKB-EC"/>
</dbReference>
<dbReference type="GO" id="GO:0008270">
    <property type="term" value="F:zinc ion binding"/>
    <property type="evidence" value="ECO:0007669"/>
    <property type="project" value="UniProtKB-UniRule"/>
</dbReference>
<dbReference type="GO" id="GO:0019544">
    <property type="term" value="P:arginine catabolic process to glutamate"/>
    <property type="evidence" value="ECO:0007669"/>
    <property type="project" value="UniProtKB-UniRule"/>
</dbReference>
<dbReference type="GO" id="GO:0019545">
    <property type="term" value="P:arginine catabolic process to succinate"/>
    <property type="evidence" value="ECO:0007669"/>
    <property type="project" value="UniProtKB-UniRule"/>
</dbReference>
<dbReference type="CDD" id="cd03855">
    <property type="entry name" value="M14_ASTE"/>
    <property type="match status" value="1"/>
</dbReference>
<dbReference type="Gene3D" id="3.40.630.10">
    <property type="entry name" value="Zn peptidases"/>
    <property type="match status" value="1"/>
</dbReference>
<dbReference type="HAMAP" id="MF_00767">
    <property type="entry name" value="Arg_catab_AstE"/>
    <property type="match status" value="1"/>
</dbReference>
<dbReference type="InterPro" id="IPR050178">
    <property type="entry name" value="AspA/AstE_fam"/>
</dbReference>
<dbReference type="InterPro" id="IPR055438">
    <property type="entry name" value="AstE_AspA_cat"/>
</dbReference>
<dbReference type="InterPro" id="IPR007036">
    <property type="entry name" value="Aste_AspA_hybrid_dom"/>
</dbReference>
<dbReference type="InterPro" id="IPR016681">
    <property type="entry name" value="SuccinylGlu_desuccinylase"/>
</dbReference>
<dbReference type="NCBIfam" id="TIGR03242">
    <property type="entry name" value="arg_catab_astE"/>
    <property type="match status" value="1"/>
</dbReference>
<dbReference type="NCBIfam" id="NF003706">
    <property type="entry name" value="PRK05324.1"/>
    <property type="match status" value="1"/>
</dbReference>
<dbReference type="PANTHER" id="PTHR15162">
    <property type="entry name" value="ASPARTOACYLASE"/>
    <property type="match status" value="1"/>
</dbReference>
<dbReference type="PANTHER" id="PTHR15162:SF7">
    <property type="entry name" value="SUCCINYLGLUTAMATE DESUCCINYLASE"/>
    <property type="match status" value="1"/>
</dbReference>
<dbReference type="Pfam" id="PF24827">
    <property type="entry name" value="AstE_AspA_cat"/>
    <property type="match status" value="1"/>
</dbReference>
<dbReference type="Pfam" id="PF04952">
    <property type="entry name" value="AstE_AspA_hybrid"/>
    <property type="match status" value="1"/>
</dbReference>
<dbReference type="PIRSF" id="PIRSF017020">
    <property type="entry name" value="AstE"/>
    <property type="match status" value="1"/>
</dbReference>
<dbReference type="SUPFAM" id="SSF53187">
    <property type="entry name" value="Zn-dependent exopeptidases"/>
    <property type="match status" value="1"/>
</dbReference>
<keyword id="KW-0056">Arginine metabolism</keyword>
<keyword id="KW-0378">Hydrolase</keyword>
<keyword id="KW-0479">Metal-binding</keyword>
<keyword id="KW-0862">Zinc</keyword>
<protein>
    <recommendedName>
        <fullName evidence="1">Succinylglutamate desuccinylase</fullName>
        <ecNumber evidence="1">3.5.1.96</ecNumber>
    </recommendedName>
</protein>
<feature type="chain" id="PRO_1000133622" description="Succinylglutamate desuccinylase">
    <location>
        <begin position="1"/>
        <end position="324"/>
    </location>
</feature>
<feature type="active site" evidence="1">
    <location>
        <position position="211"/>
    </location>
</feature>
<feature type="binding site" evidence="1">
    <location>
        <position position="53"/>
    </location>
    <ligand>
        <name>Zn(2+)</name>
        <dbReference type="ChEBI" id="CHEBI:29105"/>
    </ligand>
</feature>
<feature type="binding site" evidence="1">
    <location>
        <position position="56"/>
    </location>
    <ligand>
        <name>Zn(2+)</name>
        <dbReference type="ChEBI" id="CHEBI:29105"/>
    </ligand>
</feature>
<feature type="binding site" evidence="1">
    <location>
        <position position="148"/>
    </location>
    <ligand>
        <name>Zn(2+)</name>
        <dbReference type="ChEBI" id="CHEBI:29105"/>
    </ligand>
</feature>
<gene>
    <name evidence="1" type="primary">astE</name>
    <name type="ordered locus">A1S_3128</name>
</gene>
<proteinExistence type="inferred from homology"/>
<name>ASTE_ACIBT</name>
<organism>
    <name type="scientific">Acinetobacter baumannii (strain ATCC 17978 / DSM 105126 / CIP 53.77 / LMG 1025 / NCDC KC755 / 5377)</name>
    <dbReference type="NCBI Taxonomy" id="400667"/>
    <lineage>
        <taxon>Bacteria</taxon>
        <taxon>Pseudomonadati</taxon>
        <taxon>Pseudomonadota</taxon>
        <taxon>Gammaproteobacteria</taxon>
        <taxon>Moraxellales</taxon>
        <taxon>Moraxellaceae</taxon>
        <taxon>Acinetobacter</taxon>
        <taxon>Acinetobacter calcoaceticus/baumannii complex</taxon>
    </lineage>
</organism>
<comment type="function">
    <text evidence="1">Transforms N(2)-succinylglutamate into succinate and glutamate.</text>
</comment>
<comment type="catalytic activity">
    <reaction evidence="1">
        <text>N-succinyl-L-glutamate + H2O = L-glutamate + succinate</text>
        <dbReference type="Rhea" id="RHEA:15169"/>
        <dbReference type="ChEBI" id="CHEBI:15377"/>
        <dbReference type="ChEBI" id="CHEBI:29985"/>
        <dbReference type="ChEBI" id="CHEBI:30031"/>
        <dbReference type="ChEBI" id="CHEBI:58763"/>
        <dbReference type="EC" id="3.5.1.96"/>
    </reaction>
</comment>
<comment type="cofactor">
    <cofactor evidence="1">
        <name>Zn(2+)</name>
        <dbReference type="ChEBI" id="CHEBI:29105"/>
    </cofactor>
    <text evidence="1">Binds 1 zinc ion per subunit.</text>
</comment>
<comment type="pathway">
    <text evidence="1">Amino-acid degradation; L-arginine degradation via AST pathway; L-glutamate and succinate from L-arginine: step 5/5.</text>
</comment>
<comment type="similarity">
    <text evidence="1">Belongs to the AspA/AstE family. Succinylglutamate desuccinylase subfamily.</text>
</comment>
<sequence>MQDFLALTLQGEQPATREGKQANFSWRWLGEGLLECTPHAQYDKAVVLSAGVHGNETAPIELLSHLCTDLFAGRLKLAVRLLLVLGNPYAMRQGKRYVHDDVNRMFCGGYKNLPVTEESKRAEVLEQTVATFFQESSSQAKRYHYDLHTAIRASLLPTFALFPYQTHSYDADLTASLEAADLDALVYHNAVGKTFTHFTSENFKAASATLELGKALPFGQNDLSQFASIDEVIRNVVSEQALPVRNKPKIRVFQVSDSLIKKDEEFHMNLSAEAPNFSTFTKGEIIATQPSGNYVVEQDQVWILFPNPNVKIGLRAGLVLTETI</sequence>
<reference key="1">
    <citation type="journal article" date="2007" name="Genes Dev.">
        <title>New insights into Acinetobacter baumannii pathogenesis revealed by high-density pyrosequencing and transposon mutagenesis.</title>
        <authorList>
            <person name="Smith M.G."/>
            <person name="Gianoulis T.A."/>
            <person name="Pukatzki S."/>
            <person name="Mekalanos J.J."/>
            <person name="Ornston L.N."/>
            <person name="Gerstein M."/>
            <person name="Snyder M."/>
        </authorList>
    </citation>
    <scope>NUCLEOTIDE SEQUENCE [LARGE SCALE GENOMIC DNA]</scope>
    <source>
        <strain>ATCC 17978 / DSM 105126 / CIP 53.77 / LMG 1025 / NCDC KC755 / 5377</strain>
    </source>
</reference>
<accession>A3M9D1</accession>
<evidence type="ECO:0000255" key="1">
    <source>
        <dbReference type="HAMAP-Rule" id="MF_00767"/>
    </source>
</evidence>